<evidence type="ECO:0000255" key="1"/>
<evidence type="ECO:0000305" key="2"/>
<reference key="1">
    <citation type="journal article" date="1997" name="DNA Res.">
        <title>Construction of a contiguous 874-kb sequence of the Escherichia coli-K12 genome corresponding to 50.0-68.8 min on the linkage map and analysis of its sequence features.</title>
        <authorList>
            <person name="Yamamoto Y."/>
            <person name="Aiba H."/>
            <person name="Baba T."/>
            <person name="Hayashi K."/>
            <person name="Inada T."/>
            <person name="Isono K."/>
            <person name="Itoh T."/>
            <person name="Kimura S."/>
            <person name="Kitagawa M."/>
            <person name="Makino K."/>
            <person name="Miki T."/>
            <person name="Mitsuhashi N."/>
            <person name="Mizobuchi K."/>
            <person name="Mori H."/>
            <person name="Nakade S."/>
            <person name="Nakamura Y."/>
            <person name="Nashimoto H."/>
            <person name="Oshima T."/>
            <person name="Oyama S."/>
            <person name="Saito N."/>
            <person name="Sampei G."/>
            <person name="Satoh Y."/>
            <person name="Sivasundaram S."/>
            <person name="Tagami H."/>
            <person name="Takahashi H."/>
            <person name="Takeda J."/>
            <person name="Takemoto K."/>
            <person name="Uehara K."/>
            <person name="Wada C."/>
            <person name="Yamagata S."/>
            <person name="Horiuchi T."/>
        </authorList>
    </citation>
    <scope>NUCLEOTIDE SEQUENCE [LARGE SCALE GENOMIC DNA]</scope>
    <source>
        <strain>K12 / W3110 / ATCC 27325 / DSM 5911</strain>
    </source>
</reference>
<reference key="2">
    <citation type="journal article" date="1997" name="Science">
        <title>The complete genome sequence of Escherichia coli K-12.</title>
        <authorList>
            <person name="Blattner F.R."/>
            <person name="Plunkett G. III"/>
            <person name="Bloch C.A."/>
            <person name="Perna N.T."/>
            <person name="Burland V."/>
            <person name="Riley M."/>
            <person name="Collado-Vides J."/>
            <person name="Glasner J.D."/>
            <person name="Rode C.K."/>
            <person name="Mayhew G.F."/>
            <person name="Gregor J."/>
            <person name="Davis N.W."/>
            <person name="Kirkpatrick H.A."/>
            <person name="Goeden M.A."/>
            <person name="Rose D.J."/>
            <person name="Mau B."/>
            <person name="Shao Y."/>
        </authorList>
    </citation>
    <scope>NUCLEOTIDE SEQUENCE [LARGE SCALE GENOMIC DNA]</scope>
    <source>
        <strain>K12 / MG1655 / ATCC 47076</strain>
    </source>
</reference>
<reference key="3">
    <citation type="journal article" date="2006" name="Mol. Syst. Biol.">
        <title>Highly accurate genome sequences of Escherichia coli K-12 strains MG1655 and W3110.</title>
        <authorList>
            <person name="Hayashi K."/>
            <person name="Morooka N."/>
            <person name="Yamamoto Y."/>
            <person name="Fujita K."/>
            <person name="Isono K."/>
            <person name="Choi S."/>
            <person name="Ohtsubo E."/>
            <person name="Baba T."/>
            <person name="Wanner B.L."/>
            <person name="Mori H."/>
            <person name="Horiuchi T."/>
        </authorList>
    </citation>
    <scope>NUCLEOTIDE SEQUENCE [LARGE SCALE GENOMIC DNA]</scope>
    <source>
        <strain>K12 / W3110 / ATCC 27325 / DSM 5911</strain>
    </source>
</reference>
<comment type="function">
    <text>Probably part of the binding-protein-dependent transport system YphDEF. Probably responsible for the translocation of the substrate across the membrane.</text>
</comment>
<comment type="subcellular location">
    <subcellularLocation>
        <location evidence="2">Cell inner membrane</location>
        <topology evidence="2">Multi-pass membrane protein</topology>
    </subcellularLocation>
</comment>
<comment type="similarity">
    <text evidence="2">Belongs to the binding-protein-dependent transport system permease family. AraH/RbsC subfamily.</text>
</comment>
<accession>P77315</accession>
<organism>
    <name type="scientific">Escherichia coli (strain K12)</name>
    <dbReference type="NCBI Taxonomy" id="83333"/>
    <lineage>
        <taxon>Bacteria</taxon>
        <taxon>Pseudomonadati</taxon>
        <taxon>Pseudomonadota</taxon>
        <taxon>Gammaproteobacteria</taxon>
        <taxon>Enterobacterales</taxon>
        <taxon>Enterobacteriaceae</taxon>
        <taxon>Escherichia</taxon>
    </lineage>
</organism>
<gene>
    <name type="primary">yphD</name>
    <name type="ordered locus">b2546</name>
    <name type="ordered locus">JW2530</name>
</gene>
<keyword id="KW-0997">Cell inner membrane</keyword>
<keyword id="KW-1003">Cell membrane</keyword>
<keyword id="KW-0472">Membrane</keyword>
<keyword id="KW-1185">Reference proteome</keyword>
<keyword id="KW-0812">Transmembrane</keyword>
<keyword id="KW-1133">Transmembrane helix</keyword>
<keyword id="KW-0813">Transport</keyword>
<sequence>MSASSLPLPQGKSVSLKQFVSRHINEIGLLVVIAILYLVFSLNAPGFISLNNQMNVLRDAATIGIAAWAMTLIIISGEIDVSVGPMVAFVSVCLAFLLQFEVPLAVACLLVLLLGALMGTLAGVLRGVFNVPSFVATLGLWSALRGMGLFMTNALPVPIDENEVLDWLGGQFLGVPVSALIMIVLFALFVFISRKTAFGRSVFAVGGNATAAQLCGINVRRVRILIFTLSGLLAAVTGILLAARLGSGNAGAANGLEFDVIAAVVVGGTALSGGRGSLFGTLLGVLVITLIGNGLVLLGINSFFQQVVRGVIIVVAVLANILLTQRSSKAKR</sequence>
<feature type="chain" id="PRO_0000060264" description="Probable ABC transporter permease protein YphD">
    <location>
        <begin position="1"/>
        <end position="332"/>
    </location>
</feature>
<feature type="transmembrane region" description="Helical" evidence="1">
    <location>
        <begin position="28"/>
        <end position="48"/>
    </location>
</feature>
<feature type="transmembrane region" description="Helical" evidence="1">
    <location>
        <begin position="63"/>
        <end position="83"/>
    </location>
</feature>
<feature type="transmembrane region" description="Helical" evidence="1">
    <location>
        <begin position="84"/>
        <end position="104"/>
    </location>
</feature>
<feature type="transmembrane region" description="Helical" evidence="1">
    <location>
        <begin position="105"/>
        <end position="125"/>
    </location>
</feature>
<feature type="transmembrane region" description="Helical" evidence="1">
    <location>
        <begin position="131"/>
        <end position="151"/>
    </location>
</feature>
<feature type="transmembrane region" description="Helical" evidence="1">
    <location>
        <begin position="172"/>
        <end position="192"/>
    </location>
</feature>
<feature type="transmembrane region" description="Helical" evidence="1">
    <location>
        <begin position="222"/>
        <end position="242"/>
    </location>
</feature>
<feature type="transmembrane region" description="Helical" evidence="1">
    <location>
        <begin position="251"/>
        <end position="271"/>
    </location>
</feature>
<feature type="transmembrane region" description="Helical" evidence="1">
    <location>
        <begin position="278"/>
        <end position="298"/>
    </location>
</feature>
<feature type="transmembrane region" description="Helical" evidence="1">
    <location>
        <begin position="303"/>
        <end position="323"/>
    </location>
</feature>
<dbReference type="EMBL" id="U00096">
    <property type="protein sequence ID" value="AAC75599.1"/>
    <property type="molecule type" value="Genomic_DNA"/>
</dbReference>
<dbReference type="EMBL" id="AP009048">
    <property type="protein sequence ID" value="BAA16448.1"/>
    <property type="molecule type" value="Genomic_DNA"/>
</dbReference>
<dbReference type="PIR" id="A65032">
    <property type="entry name" value="A65032"/>
</dbReference>
<dbReference type="RefSeq" id="NP_417041.1">
    <property type="nucleotide sequence ID" value="NC_000913.3"/>
</dbReference>
<dbReference type="RefSeq" id="WP_001276670.1">
    <property type="nucleotide sequence ID" value="NZ_LN832404.1"/>
</dbReference>
<dbReference type="BioGRID" id="4261317">
    <property type="interactions" value="8"/>
</dbReference>
<dbReference type="ComplexPortal" id="CPX-4468">
    <property type="entry name" value="YphDEF ABC transporter complex"/>
</dbReference>
<dbReference type="FunCoup" id="P77315">
    <property type="interactions" value="328"/>
</dbReference>
<dbReference type="STRING" id="511145.b2546"/>
<dbReference type="TCDB" id="3.A.1.2.27">
    <property type="family name" value="the atp-binding cassette (abc) superfamily"/>
</dbReference>
<dbReference type="PaxDb" id="511145-b2546"/>
<dbReference type="EnsemblBacteria" id="AAC75599">
    <property type="protein sequence ID" value="AAC75599"/>
    <property type="gene ID" value="b2546"/>
</dbReference>
<dbReference type="GeneID" id="949063"/>
<dbReference type="KEGG" id="ecj:JW2530"/>
<dbReference type="KEGG" id="eco:b2546"/>
<dbReference type="KEGG" id="ecoc:C3026_14100"/>
<dbReference type="PATRIC" id="fig|1411691.4.peg.4188"/>
<dbReference type="EchoBASE" id="EB3238"/>
<dbReference type="eggNOG" id="COG1172">
    <property type="taxonomic scope" value="Bacteria"/>
</dbReference>
<dbReference type="HOGENOM" id="CLU_028880_2_2_6"/>
<dbReference type="InParanoid" id="P77315"/>
<dbReference type="OMA" id="GLINYGM"/>
<dbReference type="OrthoDB" id="8843934at2"/>
<dbReference type="PhylomeDB" id="P77315"/>
<dbReference type="BioCyc" id="EcoCyc:YPHD-MONOMER"/>
<dbReference type="PRO" id="PR:P77315"/>
<dbReference type="Proteomes" id="UP000000625">
    <property type="component" value="Chromosome"/>
</dbReference>
<dbReference type="GO" id="GO:0043190">
    <property type="term" value="C:ATP-binding cassette (ABC) transporter complex"/>
    <property type="evidence" value="ECO:0000305"/>
    <property type="project" value="EcoCyc"/>
</dbReference>
<dbReference type="GO" id="GO:0055052">
    <property type="term" value="C:ATP-binding cassette (ABC) transporter complex, substrate-binding subunit-containing"/>
    <property type="evidence" value="ECO:0000303"/>
    <property type="project" value="ComplexPortal"/>
</dbReference>
<dbReference type="GO" id="GO:0016020">
    <property type="term" value="C:membrane"/>
    <property type="evidence" value="ECO:0000303"/>
    <property type="project" value="ComplexPortal"/>
</dbReference>
<dbReference type="GO" id="GO:0005886">
    <property type="term" value="C:plasma membrane"/>
    <property type="evidence" value="ECO:0000314"/>
    <property type="project" value="EcoCyc"/>
</dbReference>
<dbReference type="GO" id="GO:0022857">
    <property type="term" value="F:transmembrane transporter activity"/>
    <property type="evidence" value="ECO:0007669"/>
    <property type="project" value="InterPro"/>
</dbReference>
<dbReference type="GO" id="GO:0055085">
    <property type="term" value="P:transmembrane transport"/>
    <property type="evidence" value="ECO:0000303"/>
    <property type="project" value="ComplexPortal"/>
</dbReference>
<dbReference type="CDD" id="cd06579">
    <property type="entry name" value="TM_PBP1_transp_AraH_like"/>
    <property type="match status" value="1"/>
</dbReference>
<dbReference type="InterPro" id="IPR001851">
    <property type="entry name" value="ABC_transp_permease"/>
</dbReference>
<dbReference type="PANTHER" id="PTHR32196:SF21">
    <property type="entry name" value="ABC TRANSPORTER PERMEASE PROTEIN YPHD-RELATED"/>
    <property type="match status" value="1"/>
</dbReference>
<dbReference type="PANTHER" id="PTHR32196">
    <property type="entry name" value="ABC TRANSPORTER PERMEASE PROTEIN YPHD-RELATED-RELATED"/>
    <property type="match status" value="1"/>
</dbReference>
<dbReference type="Pfam" id="PF02653">
    <property type="entry name" value="BPD_transp_2"/>
    <property type="match status" value="1"/>
</dbReference>
<proteinExistence type="inferred from homology"/>
<protein>
    <recommendedName>
        <fullName>Probable ABC transporter permease protein YphD</fullName>
    </recommendedName>
</protein>
<name>YPHD_ECOLI</name>